<protein>
    <recommendedName>
        <fullName>Glutamyl-tRNA(Gln) amidotransferase subunit A 1</fullName>
        <shortName>Glu-ADT subunit A 1</shortName>
        <ecNumber>6.3.5.7</ecNumber>
    </recommendedName>
</protein>
<organism>
    <name type="scientific">Clostridium acetobutylicum (strain ATCC 824 / DSM 792 / JCM 1419 / IAM 19013 / LMG 5710 / NBRC 13948 / NRRL B-527 / VKM B-1787 / 2291 / W)</name>
    <dbReference type="NCBI Taxonomy" id="272562"/>
    <lineage>
        <taxon>Bacteria</taxon>
        <taxon>Bacillati</taxon>
        <taxon>Bacillota</taxon>
        <taxon>Clostridia</taxon>
        <taxon>Eubacteriales</taxon>
        <taxon>Clostridiaceae</taxon>
        <taxon>Clostridium</taxon>
    </lineage>
</organism>
<comment type="function">
    <text evidence="1">Allows the formation of correctly charged Gln-tRNA(Gln) through the transamidation of misacylated Glu-tRNA(Gln) in organisms which lack glutaminyl-tRNA synthetase. The reaction takes place in the presence of glutamine and ATP through an activated gamma-phospho-Glu-tRNA(Gln) (By similarity).</text>
</comment>
<comment type="catalytic activity">
    <reaction>
        <text>L-glutamyl-tRNA(Gln) + L-glutamine + ATP + H2O = L-glutaminyl-tRNA(Gln) + L-glutamate + ADP + phosphate + H(+)</text>
        <dbReference type="Rhea" id="RHEA:17521"/>
        <dbReference type="Rhea" id="RHEA-COMP:9681"/>
        <dbReference type="Rhea" id="RHEA-COMP:9684"/>
        <dbReference type="ChEBI" id="CHEBI:15377"/>
        <dbReference type="ChEBI" id="CHEBI:15378"/>
        <dbReference type="ChEBI" id="CHEBI:29985"/>
        <dbReference type="ChEBI" id="CHEBI:30616"/>
        <dbReference type="ChEBI" id="CHEBI:43474"/>
        <dbReference type="ChEBI" id="CHEBI:58359"/>
        <dbReference type="ChEBI" id="CHEBI:78520"/>
        <dbReference type="ChEBI" id="CHEBI:78521"/>
        <dbReference type="ChEBI" id="CHEBI:456216"/>
        <dbReference type="EC" id="6.3.5.7"/>
    </reaction>
</comment>
<comment type="subunit">
    <text evidence="1">Heterotrimer of A, B and C subunits.</text>
</comment>
<comment type="similarity">
    <text evidence="2">Belongs to the amidase family. GatA subfamily.</text>
</comment>
<proteinExistence type="inferred from homology"/>
<name>GATA1_CLOAB</name>
<keyword id="KW-0067">ATP-binding</keyword>
<keyword id="KW-0436">Ligase</keyword>
<keyword id="KW-0547">Nucleotide-binding</keyword>
<keyword id="KW-0648">Protein biosynthesis</keyword>
<keyword id="KW-1185">Reference proteome</keyword>
<sequence>MELYKLKAHELKDMISKKEVKVEEVTNSFLNRIEEVDEKVNALLYVAKEEAVNTAKELDKKIESGESLSGLSGVPVAIKDNISVKNMQNTCASKILEGYVSPYDATVIENLKKNNGVIIGKANMDEFAMGSSTENSAFKVSKNPWSLERVPGGSSGGSAVAVASLEAPISLGTETGGSVRQPASFCGLVGLKPTYGRISRYGVVAFGSTLDQVGMFARDVEDCALLTQNIAGLDKMDFTTVDTPVQDYSKSLNKDLKGRKIGIPKEFFEEGLDEGVREAVKEAIKVFEENGAEVKECSLPLSDYALAAYYIISSAEASSNLARFDGVRYGYRDAEAENALDLYVKSRSKGFGEEAKRRIMLGTYVLSKGYYDAYYKKALKVRSLIKNDFQRAFKEFDAIITPTTPTPAFRIGEKTKDVLSMYMSDIYTVPVNIAGIPSISVPCGFVSGLPVGLQIMGNYFKEDTLFNLAYSYEQSTKWHDKIANL</sequence>
<accession>Q97FQ7</accession>
<gene>
    <name type="primary">gatA1</name>
    <name type="ordered locus">CA_C2670</name>
</gene>
<dbReference type="EC" id="6.3.5.7"/>
<dbReference type="EMBL" id="AE001437">
    <property type="protein sequence ID" value="AAK80617.1"/>
    <property type="molecule type" value="Genomic_DNA"/>
</dbReference>
<dbReference type="PIR" id="F97228">
    <property type="entry name" value="F97228"/>
</dbReference>
<dbReference type="RefSeq" id="NP_349277.1">
    <property type="nucleotide sequence ID" value="NC_003030.1"/>
</dbReference>
<dbReference type="SMR" id="Q97FQ7"/>
<dbReference type="STRING" id="272562.CA_C2670"/>
<dbReference type="KEGG" id="cac:CA_C2670"/>
<dbReference type="PATRIC" id="fig|272562.8.peg.2860"/>
<dbReference type="eggNOG" id="COG0154">
    <property type="taxonomic scope" value="Bacteria"/>
</dbReference>
<dbReference type="HOGENOM" id="CLU_009600_0_3_9"/>
<dbReference type="OrthoDB" id="9811471at2"/>
<dbReference type="Proteomes" id="UP000000814">
    <property type="component" value="Chromosome"/>
</dbReference>
<dbReference type="GO" id="GO:0030956">
    <property type="term" value="C:glutamyl-tRNA(Gln) amidotransferase complex"/>
    <property type="evidence" value="ECO:0007669"/>
    <property type="project" value="InterPro"/>
</dbReference>
<dbReference type="GO" id="GO:0005524">
    <property type="term" value="F:ATP binding"/>
    <property type="evidence" value="ECO:0007669"/>
    <property type="project" value="UniProtKB-KW"/>
</dbReference>
<dbReference type="GO" id="GO:0050567">
    <property type="term" value="F:glutaminyl-tRNA synthase (glutamine-hydrolyzing) activity"/>
    <property type="evidence" value="ECO:0007669"/>
    <property type="project" value="UniProtKB-UniRule"/>
</dbReference>
<dbReference type="GO" id="GO:0006412">
    <property type="term" value="P:translation"/>
    <property type="evidence" value="ECO:0007669"/>
    <property type="project" value="UniProtKB-UniRule"/>
</dbReference>
<dbReference type="Gene3D" id="3.90.1300.10">
    <property type="entry name" value="Amidase signature (AS) domain"/>
    <property type="match status" value="1"/>
</dbReference>
<dbReference type="HAMAP" id="MF_00120">
    <property type="entry name" value="GatA"/>
    <property type="match status" value="1"/>
</dbReference>
<dbReference type="InterPro" id="IPR000120">
    <property type="entry name" value="Amidase"/>
</dbReference>
<dbReference type="InterPro" id="IPR020556">
    <property type="entry name" value="Amidase_CS"/>
</dbReference>
<dbReference type="InterPro" id="IPR023631">
    <property type="entry name" value="Amidase_dom"/>
</dbReference>
<dbReference type="InterPro" id="IPR036928">
    <property type="entry name" value="AS_sf"/>
</dbReference>
<dbReference type="InterPro" id="IPR004412">
    <property type="entry name" value="GatA"/>
</dbReference>
<dbReference type="NCBIfam" id="TIGR00132">
    <property type="entry name" value="gatA"/>
    <property type="match status" value="1"/>
</dbReference>
<dbReference type="PANTHER" id="PTHR11895:SF151">
    <property type="entry name" value="GLUTAMYL-TRNA(GLN) AMIDOTRANSFERASE SUBUNIT A"/>
    <property type="match status" value="1"/>
</dbReference>
<dbReference type="PANTHER" id="PTHR11895">
    <property type="entry name" value="TRANSAMIDASE"/>
    <property type="match status" value="1"/>
</dbReference>
<dbReference type="Pfam" id="PF01425">
    <property type="entry name" value="Amidase"/>
    <property type="match status" value="1"/>
</dbReference>
<dbReference type="SUPFAM" id="SSF75304">
    <property type="entry name" value="Amidase signature (AS) enzymes"/>
    <property type="match status" value="1"/>
</dbReference>
<dbReference type="PROSITE" id="PS00571">
    <property type="entry name" value="AMIDASES"/>
    <property type="match status" value="1"/>
</dbReference>
<evidence type="ECO:0000250" key="1"/>
<evidence type="ECO:0000305" key="2"/>
<feature type="chain" id="PRO_0000105155" description="Glutamyl-tRNA(Gln) amidotransferase subunit A 1">
    <location>
        <begin position="1"/>
        <end position="485"/>
    </location>
</feature>
<feature type="active site" description="Charge relay system" evidence="1">
    <location>
        <position position="79"/>
    </location>
</feature>
<feature type="active site" description="Charge relay system" evidence="1">
    <location>
        <position position="154"/>
    </location>
</feature>
<feature type="active site" description="Acyl-ester intermediate" evidence="1">
    <location>
        <position position="178"/>
    </location>
</feature>
<reference key="1">
    <citation type="journal article" date="2001" name="J. Bacteriol.">
        <title>Genome sequence and comparative analysis of the solvent-producing bacterium Clostridium acetobutylicum.</title>
        <authorList>
            <person name="Noelling J."/>
            <person name="Breton G."/>
            <person name="Omelchenko M.V."/>
            <person name="Makarova K.S."/>
            <person name="Zeng Q."/>
            <person name="Gibson R."/>
            <person name="Lee H.M."/>
            <person name="Dubois J."/>
            <person name="Qiu D."/>
            <person name="Hitti J."/>
            <person name="Wolf Y.I."/>
            <person name="Tatusov R.L."/>
            <person name="Sabathe F."/>
            <person name="Doucette-Stamm L.A."/>
            <person name="Soucaille P."/>
            <person name="Daly M.J."/>
            <person name="Bennett G.N."/>
            <person name="Koonin E.V."/>
            <person name="Smith D.R."/>
        </authorList>
    </citation>
    <scope>NUCLEOTIDE SEQUENCE [LARGE SCALE GENOMIC DNA]</scope>
    <source>
        <strain>ATCC 824 / DSM 792 / JCM 1419 / IAM 19013 / LMG 5710 / NBRC 13948 / NRRL B-527 / VKM B-1787 / 2291 / W</strain>
    </source>
</reference>